<keyword id="KW-0255">Endonuclease</keyword>
<keyword id="KW-0378">Hydrolase</keyword>
<keyword id="KW-0540">Nuclease</keyword>
<keyword id="KW-0694">RNA-binding</keyword>
<keyword id="KW-0819">tRNA processing</keyword>
<accession>B5RFY5</accession>
<comment type="function">
    <text evidence="1">RNaseP catalyzes the removal of the 5'-leader sequence from pre-tRNA to produce the mature 5'-terminus. It can also cleave other RNA substrates such as 4.5S RNA. The protein component plays an auxiliary but essential role in vivo by binding to the 5'-leader sequence and broadening the substrate specificity of the ribozyme.</text>
</comment>
<comment type="catalytic activity">
    <reaction evidence="1">
        <text>Endonucleolytic cleavage of RNA, removing 5'-extranucleotides from tRNA precursor.</text>
        <dbReference type="EC" id="3.1.26.5"/>
    </reaction>
</comment>
<comment type="subunit">
    <text evidence="1">Consists of a catalytic RNA component (M1 or rnpB) and a protein subunit.</text>
</comment>
<comment type="similarity">
    <text evidence="1">Belongs to the RnpA family.</text>
</comment>
<reference key="1">
    <citation type="journal article" date="2008" name="Genome Res.">
        <title>Comparative genome analysis of Salmonella enteritidis PT4 and Salmonella gallinarum 287/91 provides insights into evolutionary and host adaptation pathways.</title>
        <authorList>
            <person name="Thomson N.R."/>
            <person name="Clayton D.J."/>
            <person name="Windhorst D."/>
            <person name="Vernikos G."/>
            <person name="Davidson S."/>
            <person name="Churcher C."/>
            <person name="Quail M.A."/>
            <person name="Stevens M."/>
            <person name="Jones M.A."/>
            <person name="Watson M."/>
            <person name="Barron A."/>
            <person name="Layton A."/>
            <person name="Pickard D."/>
            <person name="Kingsley R.A."/>
            <person name="Bignell A."/>
            <person name="Clark L."/>
            <person name="Harris B."/>
            <person name="Ormond D."/>
            <person name="Abdellah Z."/>
            <person name="Brooks K."/>
            <person name="Cherevach I."/>
            <person name="Chillingworth T."/>
            <person name="Woodward J."/>
            <person name="Norberczak H."/>
            <person name="Lord A."/>
            <person name="Arrowsmith C."/>
            <person name="Jagels K."/>
            <person name="Moule S."/>
            <person name="Mungall K."/>
            <person name="Saunders M."/>
            <person name="Whitehead S."/>
            <person name="Chabalgoity J.A."/>
            <person name="Maskell D."/>
            <person name="Humphreys T."/>
            <person name="Roberts M."/>
            <person name="Barrow P.A."/>
            <person name="Dougan G."/>
            <person name="Parkhill J."/>
        </authorList>
    </citation>
    <scope>NUCLEOTIDE SEQUENCE [LARGE SCALE GENOMIC DNA]</scope>
    <source>
        <strain>287/91 / NCTC 13346</strain>
    </source>
</reference>
<evidence type="ECO:0000255" key="1">
    <source>
        <dbReference type="HAMAP-Rule" id="MF_00227"/>
    </source>
</evidence>
<protein>
    <recommendedName>
        <fullName evidence="1">Ribonuclease P protein component</fullName>
        <shortName evidence="1">RNase P protein</shortName>
        <shortName evidence="1">RNaseP protein</shortName>
        <ecNumber evidence="1">3.1.26.5</ecNumber>
    </recommendedName>
    <alternativeName>
        <fullName evidence="1">Protein C5</fullName>
    </alternativeName>
</protein>
<proteinExistence type="inferred from homology"/>
<sequence>MVKLAFPRELRLLTPAHFTFVFQQPQRAGTPQITILGRLNSLGHPRIGLTVAKKNVRRAHERNRIKRLTRESFRLRQHELPAMDFVVVAKKGVADLDNRALSEALEKLWRRHCRLARGS</sequence>
<dbReference type="EC" id="3.1.26.5" evidence="1"/>
<dbReference type="EMBL" id="AM933173">
    <property type="protein sequence ID" value="CAR39379.1"/>
    <property type="molecule type" value="Genomic_DNA"/>
</dbReference>
<dbReference type="RefSeq" id="WP_000239725.1">
    <property type="nucleotide sequence ID" value="NC_011274.1"/>
</dbReference>
<dbReference type="SMR" id="B5RFY5"/>
<dbReference type="GeneID" id="93035306"/>
<dbReference type="KEGG" id="seg:SG3591"/>
<dbReference type="HOGENOM" id="CLU_117179_11_0_6"/>
<dbReference type="Proteomes" id="UP000008321">
    <property type="component" value="Chromosome"/>
</dbReference>
<dbReference type="GO" id="GO:0030677">
    <property type="term" value="C:ribonuclease P complex"/>
    <property type="evidence" value="ECO:0007669"/>
    <property type="project" value="TreeGrafter"/>
</dbReference>
<dbReference type="GO" id="GO:0042781">
    <property type="term" value="F:3'-tRNA processing endoribonuclease activity"/>
    <property type="evidence" value="ECO:0007669"/>
    <property type="project" value="TreeGrafter"/>
</dbReference>
<dbReference type="GO" id="GO:0004526">
    <property type="term" value="F:ribonuclease P activity"/>
    <property type="evidence" value="ECO:0007669"/>
    <property type="project" value="UniProtKB-UniRule"/>
</dbReference>
<dbReference type="GO" id="GO:0000049">
    <property type="term" value="F:tRNA binding"/>
    <property type="evidence" value="ECO:0007669"/>
    <property type="project" value="UniProtKB-UniRule"/>
</dbReference>
<dbReference type="GO" id="GO:0001682">
    <property type="term" value="P:tRNA 5'-leader removal"/>
    <property type="evidence" value="ECO:0007669"/>
    <property type="project" value="UniProtKB-UniRule"/>
</dbReference>
<dbReference type="FunFam" id="3.30.230.10:FF:000016">
    <property type="entry name" value="Ribonuclease P protein component"/>
    <property type="match status" value="1"/>
</dbReference>
<dbReference type="Gene3D" id="3.30.230.10">
    <property type="match status" value="1"/>
</dbReference>
<dbReference type="HAMAP" id="MF_00227">
    <property type="entry name" value="RNase_P"/>
    <property type="match status" value="1"/>
</dbReference>
<dbReference type="InterPro" id="IPR020568">
    <property type="entry name" value="Ribosomal_Su5_D2-typ_SF"/>
</dbReference>
<dbReference type="InterPro" id="IPR014721">
    <property type="entry name" value="Ribsml_uS5_D2-typ_fold_subgr"/>
</dbReference>
<dbReference type="InterPro" id="IPR000100">
    <property type="entry name" value="RNase_P"/>
</dbReference>
<dbReference type="InterPro" id="IPR020539">
    <property type="entry name" value="RNase_P_CS"/>
</dbReference>
<dbReference type="NCBIfam" id="TIGR00188">
    <property type="entry name" value="rnpA"/>
    <property type="match status" value="1"/>
</dbReference>
<dbReference type="PANTHER" id="PTHR33992">
    <property type="entry name" value="RIBONUCLEASE P PROTEIN COMPONENT"/>
    <property type="match status" value="1"/>
</dbReference>
<dbReference type="PANTHER" id="PTHR33992:SF1">
    <property type="entry name" value="RIBONUCLEASE P PROTEIN COMPONENT"/>
    <property type="match status" value="1"/>
</dbReference>
<dbReference type="Pfam" id="PF00825">
    <property type="entry name" value="Ribonuclease_P"/>
    <property type="match status" value="1"/>
</dbReference>
<dbReference type="SUPFAM" id="SSF54211">
    <property type="entry name" value="Ribosomal protein S5 domain 2-like"/>
    <property type="match status" value="1"/>
</dbReference>
<dbReference type="PROSITE" id="PS00648">
    <property type="entry name" value="RIBONUCLEASE_P"/>
    <property type="match status" value="1"/>
</dbReference>
<gene>
    <name evidence="1" type="primary">rnpA</name>
    <name type="ordered locus">SG3591</name>
</gene>
<feature type="chain" id="PRO_1000100388" description="Ribonuclease P protein component">
    <location>
        <begin position="1"/>
        <end position="119"/>
    </location>
</feature>
<name>RNPA_SALG2</name>
<organism>
    <name type="scientific">Salmonella gallinarum (strain 287/91 / NCTC 13346)</name>
    <dbReference type="NCBI Taxonomy" id="550538"/>
    <lineage>
        <taxon>Bacteria</taxon>
        <taxon>Pseudomonadati</taxon>
        <taxon>Pseudomonadota</taxon>
        <taxon>Gammaproteobacteria</taxon>
        <taxon>Enterobacterales</taxon>
        <taxon>Enterobacteriaceae</taxon>
        <taxon>Salmonella</taxon>
    </lineage>
</organism>